<protein>
    <recommendedName>
        <fullName evidence="9">Non-reducing polyketide synthase pgmA</fullName>
        <shortName evidence="9">NR-PKS pgmA</shortName>
        <ecNumber evidence="8">2.3.1.-</ecNumber>
    </recommendedName>
    <alternativeName>
        <fullName evidence="9">Pigmented naphthoquinones biosynthesis cluster protein A</fullName>
    </alternativeName>
</protein>
<proteinExistence type="evidence at protein level"/>
<sequence length="2298" mass="252618">MPNTTMELFIFGDQTLDVQPCLRGLAQHRHNPVLEDFFTKTYQVLRTEIDQLPHNVKVGLPRFTCIDDIIFRPPGSKSCIALDMAMTTFYQLGVFIRVTCALGLCTGALAAAAVSCSRNALDLVPMAVDAVRVAFRTGAHVLDIAHRIESPDASDQSWLLYVPAVEAAETALKAFREHTLLPGIRQPYITAYTLNSVMVSGPPSSLEQLKRHAPFRELNPQSVSINGPYHAPHLYSQEDIDDIVGDLACQDVHSCSCRVPVIAGDGNPVPDADFGTILKAAVAQILRQQINWNGILRELLTRHDIAGSLTLTVTTIGTKTDHFIYNVLKQSPLREYLSSKPAQSRQPVSNEGAPEPGNGRQKLAIIGMSGRFPGADDIEEFWTLLEQGLDVHKPVPSLRWDAQTHVDPTRARKNTSSTPFGCWLEHPDLFDARFFNISPREAPQIDPAQRLALMTAYEAIEQAGIVPDATPSTRRDRVGVFYGTTSNDWMETNSAQNIDTYFIPGGNRAFIPGRINYYFKFSGPSYAVDTACSSSLASIHLACNALWRREIDTAIAGGTNVLTNPDFTAGLDRGQFLSRTGNCKTFDDSADGYCRGEGVATVIIKRLEDAVADKDPILGLILSASTNHSAESESITRPHVGAQREILSNILNRGASNPYDVSYVEMHGTGTQVGDASEMSSVLETFAPAPNRVKSARGHDTPLYLGSAKANIGHGEAVSGVSSLIKVLLMMQRNTIVPHCGIKTKINHKFPTDLKDRNAHIALQPVSWERNSASSQTRKVVVNNFSAAGGNSALLVEDAPPKRESPGEAALVDPRQHHVVAVSARNAVSLEGNIRSMLKYLRENPDVQLGKLSYTTTARRLHHQHRVMVTGSKVEDIATQLQAALDEKTGMTRPKAALKVVFAFTGQGAHYPGMGKELFENFSVFRTEVHRLDRLGQTMGFPSVLPVIQSPANDIDIGTFQPSAVQLAGVCTQMALCKLWAAWNITPTAVVGHSLGEYPALNAAGVLSDADTIYLVGKRAQLLEEKCVRGTHSMLAIKASVDQITGALENMKYHVACINSPVETVLAAANEELYALKDVLTAAGFKSTPLKVPYAFHSPQVDPVLADFKELSRGVTFSRPRIPILSALDGNLHVDDHFFDPEYLIRHTREPVNMHRTLLTAAREHVITEMTTVLEIGSHPAVSGMVKGVLGPQVSCLATASRGRPNLQVLAATLKVLYMKGADICWPQYHIDFKASHEVIPLPAYSWDLKSYWIQYVNDWSLRKGDPPQVIQSSPALESTTVHRVVEETHDSTKTRIVIEADIARKDLSPLVQGHEVDGIPLCTPSVYADMALTLGTYLLKRYRPDQNDSLVDVTDMVISKALILRAGASEQLLQAHADADWAANAVTIKFKSFDARQKLQEHSQCVVRFRDRGLLEDLQNSAPSVKAKTQALRDGIVTGETARFNRPMVYRAIRPLAKFHEDYRAIDEIVLNSETLEASSRLSFGDVKRGGTYHTHPAIIDSLTQSCGFTMNCNDRSDLDKEVFMNHGWGSLQIFEPLSFDKVYTTYTRMAEGSDHLWHGDVVIFDGDKVVAYIGQISIQGVPRRVLKTVLSIESGSQKKHQPTQMKQPHTATQANGYPVANGHAQATPTSGPVNGEPRPSRFPRALEIIAEESGLSLADLTDTTVFSDVGIDSLLNLTISSRFKEEFDVDLDFTALSQDYPTVASLRALLSEPERSTNGMPAASAKDTSRFDEIPPMNGHKTNGHVMNGHSNGSSNGLPDTDKVDFQRVLQIISEESGVAMEELSEDTNFADAGIDSLLSLVIVSRFRDELELDIAHESLLMDCQSVADLKRYLFPQDHSTAENGVEPPAKNGLAADAPAVSSMSQDIISNGNGETAQPLGASLLLRQKAVDHYVQKYTAGFNAPIPNGAGNESEKTDNVKVVLVTGASGSLGGHLIDQLAQRADVKTVVCLNREHNLEPYTRQQKAMRDKGIRSFDKIRSKLLVLQTDSSQPMLGLPKSQYEELVDSVTHVIHNAWPMSAKRPLDGFEKQFQILRNLIDFACVVTSRRPKSFKFGFQLVSSIGVVGHHGLSKPHDRKEKTIVPESRVNIDSVLPNGYSEAKWACERMLDETLHKHYADRVRTMVVRLGQIAGSKRCGYWNPTEHFGFLIKSSQTLNALPDVPGMVYWTPVEEVAGSLVDLILADNRPYPVYHVDNPIGQPWSEMNKVLADALNIPNLVPFVEWVERVRSAPHRDNPAAMLSDFFIDNYLRMSCGGLVLDVKNTLEHSRVLSGVGPVTEDVVRKYIHVWKEIGFLK</sequence>
<evidence type="ECO:0000255" key="1"/>
<evidence type="ECO:0000255" key="2">
    <source>
        <dbReference type="PROSITE-ProRule" id="PRU00258"/>
    </source>
</evidence>
<evidence type="ECO:0000255" key="3">
    <source>
        <dbReference type="PROSITE-ProRule" id="PRU01348"/>
    </source>
</evidence>
<evidence type="ECO:0000255" key="4">
    <source>
        <dbReference type="PROSITE-ProRule" id="PRU01363"/>
    </source>
</evidence>
<evidence type="ECO:0000255" key="5">
    <source>
        <dbReference type="PROSITE-ProRule" id="PRU10022"/>
    </source>
</evidence>
<evidence type="ECO:0000256" key="6">
    <source>
        <dbReference type="SAM" id="MobiDB-lite"/>
    </source>
</evidence>
<evidence type="ECO:0000269" key="7">
    <source>
    </source>
</evidence>
<evidence type="ECO:0000269" key="8">
    <source>
    </source>
</evidence>
<evidence type="ECO:0000303" key="9">
    <source>
    </source>
</evidence>
<evidence type="ECO:0000305" key="10"/>
<evidence type="ECO:0000305" key="11">
    <source>
    </source>
</evidence>
<evidence type="ECO:0000305" key="12">
    <source>
    </source>
</evidence>
<comment type="function">
    <text evidence="7 8 12">Non-reducing polyketide synthase; part of the gene cluster that mediates the biosynthesis of pleosporalin A, ascomycone A, as well as a third cryptic naphthoquinone derived pigment, all responsible for the coloration of conidia (PubMed:28471414, PubMed:35351612). The non-reducing polyketide synthase pgmA is responsible for the condensation of seven acetyl-CoA units to produce the cyclized heptaketide 3-acetonyl-1,6,8-trihydroxy-2-naphthaldehyde (PubMed:35351612). The pathway begins with the biosynthesis of the cyclized heptaketide 3-acetonyl-1,6,8-trihydroxy-2-naphthaldehyde by the NR-PKS pgmA. The C-6 hydroxyl group is further methylated by the O-methyltransferase pgmB to yield fusarubinaldehyde which is in turn oxidized by the cytochrome P450 monooxygenase pgmC at C-9. The C-1 hydroxyl group is then methylated spontaneously. Although pgmE, pgmD and pgmH are essential for the production of pleosporalin A, it is not the case for the 2 other final products and it remains difficult to assign a specific function to each enzyme. PgmF and pgmG seem not to be involved in pigment biosynthesis although they were regulated by the cluster-specific transcription factor pgmR (Probable) (PubMed:35351612).</text>
</comment>
<comment type="pathway">
    <text evidence="8">Pigment biosynthesis.</text>
</comment>
<comment type="pathway">
    <text evidence="8">Secondary metabolite biosynthesis.</text>
</comment>
<comment type="induction">
    <text evidence="8">Expression is positively regulated by the pgm cluster-specific transcription factor pgmR.</text>
</comment>
<comment type="domain">
    <text evidence="11">Multidomain protein; including a starter unit:ACP transacylase (SAT) that selects the starter unit; a ketosynthase (KS) that catalyzes repeated decarboxylative condensation to elongate the polyketide back-bone; a malonyl-CoA:ACP transacylase (MAT) that selects and transfers the extender unit malonyl-CoA; a product template (PT) domain that controls the immediate cyclization regioselectivity of the reactive polyketide backbone; and 2 acyl-carrier protein (ACP) that serve as the tethers of the growing and complete polyketide via their phosphopantetheinyl arm. At the C-terminus, FSR1 exhibits a reductase (R) domain instead of the canonical TE domain. In contrast to TE and TE/CLC domains, R domains show sequence similarities to the short-chain dehydrogenase/reductase (SDR) superfamily, exhibiting Rossman fold structure and nucleotide binding motifs.</text>
</comment>
<comment type="disruption phenotype">
    <text evidence="8">Abolished completely the production of the naphthoquinones derived pigments.</text>
</comment>
<comment type="sequence caution" evidence="10">
    <conflict type="erroneous gene model prediction">
        <sequence resource="EMBL-CDS" id="EAU33967"/>
    </conflict>
</comment>
<gene>
    <name evidence="9" type="primary">pgmA</name>
    <name type="ORF">ATEG_06206</name>
</gene>
<accession>A0A1W7M1U5</accession>
<accession>Q0CJC8</accession>
<reference key="1">
    <citation type="journal article" date="2017" name="Microorganisms">
        <title>Melanisation of Aspergillus terreus-is butyrolactone I involved in the regulation of both DOPA and DHN types of pigments in submerged culture?</title>
        <authorList>
            <person name="Palonen E.K."/>
            <person name="Raina S."/>
            <person name="Brandt A."/>
            <person name="Meriluoto J."/>
            <person name="Keshavarz T."/>
            <person name="Soini J.T."/>
        </authorList>
    </citation>
    <scope>NUCLEOTIDE SEQUENCE [GENOMIC DNA]</scope>
    <scope>FUNCTION</scope>
    <scope>IDENTIFICATION</scope>
    <source>
        <strain>NIH 2624 / FGSC A1156</strain>
    </source>
</reference>
<reference key="2">
    <citation type="submission" date="2005-09" db="EMBL/GenBank/DDBJ databases">
        <title>Annotation of the Aspergillus terreus NIH2624 genome.</title>
        <authorList>
            <person name="Birren B.W."/>
            <person name="Lander E.S."/>
            <person name="Galagan J.E."/>
            <person name="Nusbaum C."/>
            <person name="Devon K."/>
            <person name="Henn M."/>
            <person name="Ma L.-J."/>
            <person name="Jaffe D.B."/>
            <person name="Butler J."/>
            <person name="Alvarez P."/>
            <person name="Gnerre S."/>
            <person name="Grabherr M."/>
            <person name="Kleber M."/>
            <person name="Mauceli E.W."/>
            <person name="Brockman W."/>
            <person name="Rounsley S."/>
            <person name="Young S.K."/>
            <person name="LaButti K."/>
            <person name="Pushparaj V."/>
            <person name="DeCaprio D."/>
            <person name="Crawford M."/>
            <person name="Koehrsen M."/>
            <person name="Engels R."/>
            <person name="Montgomery P."/>
            <person name="Pearson M."/>
            <person name="Howarth C."/>
            <person name="Larson L."/>
            <person name="Luoma S."/>
            <person name="White J."/>
            <person name="Alvarado L."/>
            <person name="Kodira C.D."/>
            <person name="Zeng Q."/>
            <person name="Oleary S."/>
            <person name="Yandava C."/>
            <person name="Denning D.W."/>
            <person name="Nierman W.C."/>
            <person name="Milne T."/>
            <person name="Madden K."/>
        </authorList>
    </citation>
    <scope>NUCLEOTIDE SEQUENCE [LARGE SCALE GENOMIC DNA]</scope>
    <source>
        <strain>NIH 2624 / FGSC A1156</strain>
    </source>
</reference>
<reference key="3">
    <citation type="journal article" date="2022" name="Fungal Genet. Biol.">
        <title>Identification of a polyketide biosynthesis gene cluster by transcriptional regulator activation in Aspergillus terreus.</title>
        <authorList>
            <person name="Tang S."/>
            <person name="Men P."/>
            <person name="Zhang W."/>
            <person name="Li H."/>
            <person name="Li Z."/>
            <person name="Huang X."/>
            <person name="Lu X."/>
        </authorList>
    </citation>
    <scope>FUNCTION</scope>
    <scope>DOMAIN</scope>
    <scope>DISRUPTION PHENOTYPE</scope>
    <scope>INDUCTION</scope>
    <scope>CATALYTIC ACTIVITY</scope>
    <scope>PATHWAY</scope>
</reference>
<keyword id="KW-0012">Acyltransferase</keyword>
<keyword id="KW-0596">Phosphopantetheine</keyword>
<keyword id="KW-0597">Phosphoprotein</keyword>
<keyword id="KW-1185">Reference proteome</keyword>
<keyword id="KW-0808">Transferase</keyword>
<dbReference type="EC" id="2.3.1.-" evidence="8"/>
<dbReference type="EMBL" id="BK009975">
    <property type="protein sequence ID" value="DAA80467.1"/>
    <property type="molecule type" value="Genomic_DNA"/>
</dbReference>
<dbReference type="EMBL" id="CH476601">
    <property type="protein sequence ID" value="EAU33967.1"/>
    <property type="status" value="ALT_SEQ"/>
    <property type="molecule type" value="Genomic_DNA"/>
</dbReference>
<dbReference type="RefSeq" id="XP_001215384.1">
    <property type="nucleotide sequence ID" value="XM_001215384.1"/>
</dbReference>
<dbReference type="SMR" id="A0A1W7M1U5"/>
<dbReference type="STRING" id="341663.Q0CJC8"/>
<dbReference type="EnsemblFungi" id="EAU33967">
    <property type="protein sequence ID" value="EAU33967"/>
    <property type="gene ID" value="ATEG_06206"/>
</dbReference>
<dbReference type="GeneID" id="4321475"/>
<dbReference type="VEuPathDB" id="FungiDB:ATEG_06206"/>
<dbReference type="eggNOG" id="KOG1202">
    <property type="taxonomic scope" value="Eukaryota"/>
</dbReference>
<dbReference type="HOGENOM" id="CLU_000022_16_6_1"/>
<dbReference type="OrthoDB" id="329835at2759"/>
<dbReference type="Proteomes" id="UP000007963">
    <property type="component" value="Unassembled WGS sequence"/>
</dbReference>
<dbReference type="GO" id="GO:0004315">
    <property type="term" value="F:3-oxoacyl-[acyl-carrier-protein] synthase activity"/>
    <property type="evidence" value="ECO:0007669"/>
    <property type="project" value="InterPro"/>
</dbReference>
<dbReference type="GO" id="GO:0004312">
    <property type="term" value="F:fatty acid synthase activity"/>
    <property type="evidence" value="ECO:0007669"/>
    <property type="project" value="TreeGrafter"/>
</dbReference>
<dbReference type="GO" id="GO:0006633">
    <property type="term" value="P:fatty acid biosynthetic process"/>
    <property type="evidence" value="ECO:0007669"/>
    <property type="project" value="InterPro"/>
</dbReference>
<dbReference type="GO" id="GO:0044550">
    <property type="term" value="P:secondary metabolite biosynthetic process"/>
    <property type="evidence" value="ECO:0007669"/>
    <property type="project" value="TreeGrafter"/>
</dbReference>
<dbReference type="CDD" id="cd00833">
    <property type="entry name" value="PKS"/>
    <property type="match status" value="1"/>
</dbReference>
<dbReference type="FunFam" id="1.10.1200.10:FF:000011">
    <property type="entry name" value="Sterigmatocystin biosynthesis polyketide synthase"/>
    <property type="match status" value="1"/>
</dbReference>
<dbReference type="FunFam" id="3.10.129.110:FF:000001">
    <property type="entry name" value="Sterigmatocystin biosynthesis polyketide synthase"/>
    <property type="match status" value="1"/>
</dbReference>
<dbReference type="Gene3D" id="3.30.70.3290">
    <property type="match status" value="1"/>
</dbReference>
<dbReference type="Gene3D" id="3.40.47.10">
    <property type="match status" value="1"/>
</dbReference>
<dbReference type="Gene3D" id="1.10.1200.10">
    <property type="entry name" value="ACP-like"/>
    <property type="match status" value="2"/>
</dbReference>
<dbReference type="Gene3D" id="3.40.366.10">
    <property type="entry name" value="Malonyl-Coenzyme A Acyl Carrier Protein, domain 2"/>
    <property type="match status" value="2"/>
</dbReference>
<dbReference type="Gene3D" id="3.40.50.720">
    <property type="entry name" value="NAD(P)-binding Rossmann-like Domain"/>
    <property type="match status" value="1"/>
</dbReference>
<dbReference type="Gene3D" id="3.10.129.110">
    <property type="entry name" value="Polyketide synthase dehydratase"/>
    <property type="match status" value="1"/>
</dbReference>
<dbReference type="InterPro" id="IPR001227">
    <property type="entry name" value="Ac_transferase_dom_sf"/>
</dbReference>
<dbReference type="InterPro" id="IPR036736">
    <property type="entry name" value="ACP-like_sf"/>
</dbReference>
<dbReference type="InterPro" id="IPR014043">
    <property type="entry name" value="Acyl_transferase_dom"/>
</dbReference>
<dbReference type="InterPro" id="IPR016035">
    <property type="entry name" value="Acyl_Trfase/lysoPLipase"/>
</dbReference>
<dbReference type="InterPro" id="IPR013120">
    <property type="entry name" value="Far_NAD-bd"/>
</dbReference>
<dbReference type="InterPro" id="IPR018201">
    <property type="entry name" value="Ketoacyl_synth_AS"/>
</dbReference>
<dbReference type="InterPro" id="IPR014031">
    <property type="entry name" value="Ketoacyl_synth_C"/>
</dbReference>
<dbReference type="InterPro" id="IPR014030">
    <property type="entry name" value="Ketoacyl_synth_N"/>
</dbReference>
<dbReference type="InterPro" id="IPR016036">
    <property type="entry name" value="Malonyl_transacylase_ACP-bd"/>
</dbReference>
<dbReference type="InterPro" id="IPR036291">
    <property type="entry name" value="NAD(P)-bd_dom_sf"/>
</dbReference>
<dbReference type="InterPro" id="IPR020841">
    <property type="entry name" value="PKS_Beta-ketoAc_synthase_dom"/>
</dbReference>
<dbReference type="InterPro" id="IPR042104">
    <property type="entry name" value="PKS_dehydratase_sf"/>
</dbReference>
<dbReference type="InterPro" id="IPR049551">
    <property type="entry name" value="PKS_DH_C"/>
</dbReference>
<dbReference type="InterPro" id="IPR049900">
    <property type="entry name" value="PKS_mFAS_DH"/>
</dbReference>
<dbReference type="InterPro" id="IPR050091">
    <property type="entry name" value="PKS_NRPS_Biosynth_Enz"/>
</dbReference>
<dbReference type="InterPro" id="IPR009081">
    <property type="entry name" value="PP-bd_ACP"/>
</dbReference>
<dbReference type="InterPro" id="IPR030918">
    <property type="entry name" value="PT_fungal_PKS"/>
</dbReference>
<dbReference type="InterPro" id="IPR032088">
    <property type="entry name" value="SAT"/>
</dbReference>
<dbReference type="InterPro" id="IPR016039">
    <property type="entry name" value="Thiolase-like"/>
</dbReference>
<dbReference type="NCBIfam" id="TIGR04532">
    <property type="entry name" value="PT_fungal_PKS"/>
    <property type="match status" value="1"/>
</dbReference>
<dbReference type="PANTHER" id="PTHR43775">
    <property type="entry name" value="FATTY ACID SYNTHASE"/>
    <property type="match status" value="1"/>
</dbReference>
<dbReference type="PANTHER" id="PTHR43775:SF40">
    <property type="entry name" value="NORSOLORINIC ACID SYNTHASE STCA"/>
    <property type="match status" value="1"/>
</dbReference>
<dbReference type="Pfam" id="PF00698">
    <property type="entry name" value="Acyl_transf_1"/>
    <property type="match status" value="1"/>
</dbReference>
<dbReference type="Pfam" id="PF22621">
    <property type="entry name" value="CurL-like_PKS_C"/>
    <property type="match status" value="1"/>
</dbReference>
<dbReference type="Pfam" id="PF00109">
    <property type="entry name" value="ketoacyl-synt"/>
    <property type="match status" value="1"/>
</dbReference>
<dbReference type="Pfam" id="PF02801">
    <property type="entry name" value="Ketoacyl-synt_C"/>
    <property type="match status" value="1"/>
</dbReference>
<dbReference type="Pfam" id="PF07993">
    <property type="entry name" value="NAD_binding_4"/>
    <property type="match status" value="1"/>
</dbReference>
<dbReference type="Pfam" id="PF00550">
    <property type="entry name" value="PP-binding"/>
    <property type="match status" value="2"/>
</dbReference>
<dbReference type="Pfam" id="PF14765">
    <property type="entry name" value="PS-DH"/>
    <property type="match status" value="1"/>
</dbReference>
<dbReference type="Pfam" id="PF16073">
    <property type="entry name" value="SAT"/>
    <property type="match status" value="1"/>
</dbReference>
<dbReference type="SMART" id="SM00827">
    <property type="entry name" value="PKS_AT"/>
    <property type="match status" value="1"/>
</dbReference>
<dbReference type="SMART" id="SM00825">
    <property type="entry name" value="PKS_KS"/>
    <property type="match status" value="1"/>
</dbReference>
<dbReference type="SUPFAM" id="SSF47336">
    <property type="entry name" value="ACP-like"/>
    <property type="match status" value="2"/>
</dbReference>
<dbReference type="SUPFAM" id="SSF52151">
    <property type="entry name" value="FabD/lysophospholipase-like"/>
    <property type="match status" value="1"/>
</dbReference>
<dbReference type="SUPFAM" id="SSF51735">
    <property type="entry name" value="NAD(P)-binding Rossmann-fold domains"/>
    <property type="match status" value="1"/>
</dbReference>
<dbReference type="SUPFAM" id="SSF55048">
    <property type="entry name" value="Probable ACP-binding domain of malonyl-CoA ACP transacylase"/>
    <property type="match status" value="1"/>
</dbReference>
<dbReference type="SUPFAM" id="SSF53901">
    <property type="entry name" value="Thiolase-like"/>
    <property type="match status" value="2"/>
</dbReference>
<dbReference type="PROSITE" id="PS50075">
    <property type="entry name" value="CARRIER"/>
    <property type="match status" value="2"/>
</dbReference>
<dbReference type="PROSITE" id="PS00606">
    <property type="entry name" value="KS3_1"/>
    <property type="match status" value="1"/>
</dbReference>
<dbReference type="PROSITE" id="PS52004">
    <property type="entry name" value="KS3_2"/>
    <property type="match status" value="1"/>
</dbReference>
<dbReference type="PROSITE" id="PS52019">
    <property type="entry name" value="PKS_MFAS_DH"/>
    <property type="match status" value="1"/>
</dbReference>
<feature type="chain" id="PRO_0000456001" description="Non-reducing polyketide synthase pgmA">
    <location>
        <begin position="1"/>
        <end position="2298"/>
    </location>
</feature>
<feature type="domain" description="Ketosynthase family 3 (KS3)" evidence="3 11">
    <location>
        <begin position="360"/>
        <end position="798"/>
    </location>
</feature>
<feature type="domain" description="PKS/mFAS DH" evidence="4">
    <location>
        <begin position="1283"/>
        <end position="1589"/>
    </location>
</feature>
<feature type="domain" description="Carrier 1" evidence="2">
    <location>
        <begin position="1641"/>
        <end position="1716"/>
    </location>
</feature>
<feature type="domain" description="Carrier 2" evidence="2">
    <location>
        <begin position="1765"/>
        <end position="1840"/>
    </location>
</feature>
<feature type="region of interest" description="N-terminal acylcarrier protein transacylase domain (SAT)" evidence="1 11">
    <location>
        <begin position="8"/>
        <end position="333"/>
    </location>
</feature>
<feature type="region of interest" description="Disordered" evidence="6">
    <location>
        <begin position="336"/>
        <end position="361"/>
    </location>
</feature>
<feature type="region of interest" description="Acyl/malonyl transferases" evidence="1 11">
    <location>
        <begin position="901"/>
        <end position="1193"/>
    </location>
</feature>
<feature type="region of interest" description="N-terminal hotdog fold" evidence="4">
    <location>
        <begin position="1283"/>
        <end position="1415"/>
    </location>
</feature>
<feature type="region of interest" description="Product template (PT) domainn" evidence="1 11">
    <location>
        <begin position="1294"/>
        <end position="1586"/>
    </location>
</feature>
<feature type="region of interest" description="C-terminal hotdog fold" evidence="4">
    <location>
        <begin position="1438"/>
        <end position="1589"/>
    </location>
</feature>
<feature type="region of interest" description="Disordered" evidence="6">
    <location>
        <begin position="1619"/>
        <end position="1642"/>
    </location>
</feature>
<feature type="region of interest" description="Disordered" evidence="6">
    <location>
        <begin position="1716"/>
        <end position="1762"/>
    </location>
</feature>
<feature type="region of interest" description="Reductase (R) domain" evidence="1 11">
    <location>
        <begin position="1927"/>
        <end position="2178"/>
    </location>
</feature>
<feature type="compositionally biased region" description="Polar residues" evidence="6">
    <location>
        <begin position="340"/>
        <end position="349"/>
    </location>
</feature>
<feature type="compositionally biased region" description="Polar residues" evidence="6">
    <location>
        <begin position="1751"/>
        <end position="1760"/>
    </location>
</feature>
<feature type="active site" description="For beta-ketoacyl synthase activity" evidence="3">
    <location>
        <position position="532"/>
    </location>
</feature>
<feature type="active site" description="For beta-ketoacyl synthase activity" evidence="3">
    <location>
        <position position="667"/>
    </location>
</feature>
<feature type="active site" description="For beta-ketoacyl synthase activity" evidence="3">
    <location>
        <position position="714"/>
    </location>
</feature>
<feature type="active site" description="For acyl/malonyl transferase activity" evidence="5">
    <location>
        <position position="994"/>
    </location>
</feature>
<feature type="active site" description="Proton acceptor; for dehydratase activity" evidence="4">
    <location>
        <position position="1315"/>
    </location>
</feature>
<feature type="active site" description="Proton donor; for dehydratase activity" evidence="4">
    <location>
        <position position="1502"/>
    </location>
</feature>
<feature type="modified residue" description="O-(pantetheine 4'-phosphoryl)serine" evidence="2">
    <location>
        <position position="1675"/>
    </location>
</feature>
<feature type="modified residue" description="O-(pantetheine 4'-phosphoryl)serine" evidence="2">
    <location>
        <position position="1799"/>
    </location>
</feature>
<name>PGMA_ASPTN</name>
<organism>
    <name type="scientific">Aspergillus terreus (strain NIH 2624 / FGSC A1156)</name>
    <dbReference type="NCBI Taxonomy" id="341663"/>
    <lineage>
        <taxon>Eukaryota</taxon>
        <taxon>Fungi</taxon>
        <taxon>Dikarya</taxon>
        <taxon>Ascomycota</taxon>
        <taxon>Pezizomycotina</taxon>
        <taxon>Eurotiomycetes</taxon>
        <taxon>Eurotiomycetidae</taxon>
        <taxon>Eurotiales</taxon>
        <taxon>Aspergillaceae</taxon>
        <taxon>Aspergillus</taxon>
        <taxon>Aspergillus subgen. Circumdati</taxon>
    </lineage>
</organism>